<name>PHK_BIFA0</name>
<protein>
    <recommendedName>
        <fullName evidence="1">Probable phosphoketolase</fullName>
        <ecNumber evidence="1">4.1.2.-</ecNumber>
    </recommendedName>
</protein>
<dbReference type="EC" id="4.1.2.-" evidence="1"/>
<dbReference type="EMBL" id="CP001213">
    <property type="protein sequence ID" value="ACL29765.1"/>
    <property type="molecule type" value="Genomic_DNA"/>
</dbReference>
<dbReference type="RefSeq" id="WP_004217768.1">
    <property type="nucleotide sequence ID" value="NC_011835.1"/>
</dbReference>
<dbReference type="SMR" id="B8DUT6"/>
<dbReference type="STRING" id="442563.BLA_1483"/>
<dbReference type="KEGG" id="bla:BLA_1483"/>
<dbReference type="HOGENOM" id="CLU_013954_2_0_11"/>
<dbReference type="Proteomes" id="UP000002456">
    <property type="component" value="Chromosome"/>
</dbReference>
<dbReference type="GO" id="GO:0016832">
    <property type="term" value="F:aldehyde-lyase activity"/>
    <property type="evidence" value="ECO:0007669"/>
    <property type="project" value="UniProtKB-UniRule"/>
</dbReference>
<dbReference type="GO" id="GO:0000287">
    <property type="term" value="F:magnesium ion binding"/>
    <property type="evidence" value="ECO:0007669"/>
    <property type="project" value="UniProtKB-ARBA"/>
</dbReference>
<dbReference type="GO" id="GO:0005975">
    <property type="term" value="P:carbohydrate metabolic process"/>
    <property type="evidence" value="ECO:0007669"/>
    <property type="project" value="InterPro"/>
</dbReference>
<dbReference type="Gene3D" id="3.40.50.920">
    <property type="match status" value="1"/>
</dbReference>
<dbReference type="Gene3D" id="3.40.50.970">
    <property type="match status" value="2"/>
</dbReference>
<dbReference type="HAMAP" id="MF_01403">
    <property type="entry name" value="Phosphoketolase"/>
    <property type="match status" value="1"/>
</dbReference>
<dbReference type="InterPro" id="IPR023962">
    <property type="entry name" value="Phosphoketolase"/>
</dbReference>
<dbReference type="InterPro" id="IPR029061">
    <property type="entry name" value="THDP-binding"/>
</dbReference>
<dbReference type="InterPro" id="IPR009014">
    <property type="entry name" value="Transketo_C/PFOR_II"/>
</dbReference>
<dbReference type="InterPro" id="IPR005593">
    <property type="entry name" value="Xul5P/Fru6P_PKetolase"/>
</dbReference>
<dbReference type="InterPro" id="IPR018969">
    <property type="entry name" value="Xul5P/Fru6P_PKetolase_C"/>
</dbReference>
<dbReference type="InterPro" id="IPR019790">
    <property type="entry name" value="Xul5P/Fru6P_PKetolase_CS"/>
</dbReference>
<dbReference type="InterPro" id="IPR018970">
    <property type="entry name" value="Xul5P/Fru6P_PKetolase_N"/>
</dbReference>
<dbReference type="InterPro" id="IPR019789">
    <property type="entry name" value="Xul5P/Fru6P_PKetolase_ThDP_BS"/>
</dbReference>
<dbReference type="NCBIfam" id="NF003619">
    <property type="entry name" value="PRK05261.1-4"/>
    <property type="match status" value="1"/>
</dbReference>
<dbReference type="NCBIfam" id="NF003620">
    <property type="entry name" value="PRK05261.1-5"/>
    <property type="match status" value="1"/>
</dbReference>
<dbReference type="PANTHER" id="PTHR31273">
    <property type="entry name" value="PHOSPHOKETOLASE-RELATED"/>
    <property type="match status" value="1"/>
</dbReference>
<dbReference type="PANTHER" id="PTHR31273:SF0">
    <property type="entry name" value="PHOSPHOKETOLASE-RELATED"/>
    <property type="match status" value="1"/>
</dbReference>
<dbReference type="Pfam" id="PF03894">
    <property type="entry name" value="XFP"/>
    <property type="match status" value="1"/>
</dbReference>
<dbReference type="Pfam" id="PF09363">
    <property type="entry name" value="XFP_C"/>
    <property type="match status" value="1"/>
</dbReference>
<dbReference type="Pfam" id="PF09364">
    <property type="entry name" value="XFP_N"/>
    <property type="match status" value="1"/>
</dbReference>
<dbReference type="PIRSF" id="PIRSF017245">
    <property type="entry name" value="Phosphoketolase"/>
    <property type="match status" value="1"/>
</dbReference>
<dbReference type="SUPFAM" id="SSF52518">
    <property type="entry name" value="Thiamin diphosphate-binding fold (THDP-binding)"/>
    <property type="match status" value="2"/>
</dbReference>
<dbReference type="PROSITE" id="PS60002">
    <property type="entry name" value="PHOSPHOKETOLASE_1"/>
    <property type="match status" value="1"/>
</dbReference>
<dbReference type="PROSITE" id="PS60003">
    <property type="entry name" value="PHOSPHOKETOLASE_2"/>
    <property type="match status" value="1"/>
</dbReference>
<gene>
    <name type="ordered locus">BLA_1483</name>
</gene>
<evidence type="ECO:0000255" key="1">
    <source>
        <dbReference type="HAMAP-Rule" id="MF_01403"/>
    </source>
</evidence>
<keyword id="KW-0456">Lyase</keyword>
<keyword id="KW-1185">Reference proteome</keyword>
<keyword id="KW-0786">Thiamine pyrophosphate</keyword>
<feature type="chain" id="PRO_1000184576" description="Probable phosphoketolase">
    <location>
        <begin position="1"/>
        <end position="825"/>
    </location>
</feature>
<proteinExistence type="inferred from homology"/>
<accession>B8DUT6</accession>
<reference key="1">
    <citation type="journal article" date="2009" name="J. Bacteriol.">
        <title>Genome sequence of the probiotic bacterium Bifidobacterium animalis subsp. lactis AD011.</title>
        <authorList>
            <person name="Kim J.F."/>
            <person name="Jeong H."/>
            <person name="Yu D.S."/>
            <person name="Choi S.-H."/>
            <person name="Hur C.-G."/>
            <person name="Park M.-S."/>
            <person name="Yoon S.H."/>
            <person name="Kim D.-W."/>
            <person name="Ji G.E."/>
            <person name="Park H.-S."/>
            <person name="Oh T.K."/>
        </authorList>
    </citation>
    <scope>NUCLEOTIDE SEQUENCE [LARGE SCALE GENOMIC DNA]</scope>
    <source>
        <strain>AD011</strain>
    </source>
</reference>
<comment type="cofactor">
    <cofactor evidence="1">
        <name>thiamine diphosphate</name>
        <dbReference type="ChEBI" id="CHEBI:58937"/>
    </cofactor>
</comment>
<comment type="similarity">
    <text evidence="1">Belongs to the XFP family.</text>
</comment>
<sequence>MTNPVIGTPWQKLDRPVSEEAIEGMDKYWRVANYMSIGQIYLRSNPLMKEPFTRDDVKHRLVGHWGTTPGLNFLLAHINRLIADHQQNTVFIMGPGHGGPAGTAQSYIDGTYTEYYPNITKDEAGLQKFFRQFSYPGGIPSHFAPETPGSIHEGGELGYALSHAYGAIMDNPSLFVPCIIGDGEAETGPLATGWQSNKLVNPRTDGIVLPILHLNGYKIANPTILARISDEELHDFFRGMGYHPYEFVAGFDNEDHLSIHRRFAELFETIFDEICDIKAAAQTDDMTRPFYPMLIFRTPKGWTCPKFIDGKKTEGSWRAHQVPLASARDTEAHFEVLKGWMESYKPEELFNADGSIKEDVTAFMPKGELRIGANPNANGGRIREDLKLPELDQYEITGVKEYGHGWGQVEAPRSLGAYCRDIIKNNPDSFRVFGPDETASNRLNATYEVTKKQWDNGYLSALVDENMAVTGQVVEQLSEHQCEGFLEAYLLTGRHGIWSSYESFVHVIDSMLNQHAKWLEATVREIPWRKPISSVNLLVSSHVWRQDHNGFSHQDPGVTSVLLNKTFNNDHVTNIYFATDANMLLAIAEKCFKSTNKINAIFAGKQPAATWITLDEARAELEAGAAEWKWASNAKSNDEVQVVLAAAGDVPTQEIMAASDALNKMGIKFKVVNVVDLIKLQSSKENDEAMSDEDFADLFTADKPVLFAYHSYAQDVRGLIYDRPNHDNFTVVGYKEQGSTTTPFDMVRVNDMDRYALQAKALELIDADKYADKINELNEFRKTAFQFAVDNGYDIPEFTDWVYPDVKVDETSMLSATAATAGDNE</sequence>
<organism>
    <name type="scientific">Bifidobacterium animalis subsp. lactis (strain AD011)</name>
    <dbReference type="NCBI Taxonomy" id="442563"/>
    <lineage>
        <taxon>Bacteria</taxon>
        <taxon>Bacillati</taxon>
        <taxon>Actinomycetota</taxon>
        <taxon>Actinomycetes</taxon>
        <taxon>Bifidobacteriales</taxon>
        <taxon>Bifidobacteriaceae</taxon>
        <taxon>Bifidobacterium</taxon>
    </lineage>
</organism>